<accession>Q09ME2</accession>
<geneLocation type="chloroplast"/>
<keyword id="KW-0150">Chloroplast</keyword>
<keyword id="KW-0934">Plastid</keyword>
<keyword id="KW-0687">Ribonucleoprotein</keyword>
<keyword id="KW-0689">Ribosomal protein</keyword>
<keyword id="KW-0694">RNA-binding</keyword>
<keyword id="KW-0699">rRNA-binding</keyword>
<feature type="chain" id="PRO_0000276718" description="Small ribosomal subunit protein uS8c">
    <location>
        <begin position="1"/>
        <end position="136"/>
    </location>
</feature>
<organism>
    <name type="scientific">Citrus sinensis</name>
    <name type="common">Sweet orange</name>
    <name type="synonym">Citrus aurantium var. sinensis</name>
    <dbReference type="NCBI Taxonomy" id="2711"/>
    <lineage>
        <taxon>Eukaryota</taxon>
        <taxon>Viridiplantae</taxon>
        <taxon>Streptophyta</taxon>
        <taxon>Embryophyta</taxon>
        <taxon>Tracheophyta</taxon>
        <taxon>Spermatophyta</taxon>
        <taxon>Magnoliopsida</taxon>
        <taxon>eudicotyledons</taxon>
        <taxon>Gunneridae</taxon>
        <taxon>Pentapetalae</taxon>
        <taxon>rosids</taxon>
        <taxon>malvids</taxon>
        <taxon>Sapindales</taxon>
        <taxon>Rutaceae</taxon>
        <taxon>Aurantioideae</taxon>
        <taxon>Citrus</taxon>
    </lineage>
</organism>
<evidence type="ECO:0000250" key="1"/>
<evidence type="ECO:0000305" key="2"/>
<reference key="1">
    <citation type="journal article" date="2006" name="BMC Plant Biol.">
        <title>The complete chloroplast genome sequence of Citrus sinensis (L.) Osbeck var 'Ridge Pineapple': organization and phylogenetic relationships to other angiosperms.</title>
        <authorList>
            <person name="Bausher M.G."/>
            <person name="Singh N.D."/>
            <person name="Lee S.-B."/>
            <person name="Jansen R.K."/>
            <person name="Daniell H."/>
        </authorList>
    </citation>
    <scope>NUCLEOTIDE SEQUENCE [LARGE SCALE GENOMIC DNA]</scope>
    <source>
        <strain>cv. Osbeck var. Ridge Pineapple</strain>
    </source>
</reference>
<sequence length="136" mass="15807">MGKDTIADIITSIRNADMNRKGTVRIASTNITENVVKILLREGFIENARKLVENKNKKEFLVLTLRHRRNRKGPYRPILNLKRISRPGLRIYFNYRRIPRILDGMGIVILSTSRGIMTDRAARLERIGGEILCYIW</sequence>
<name>RR8_CITSI</name>
<protein>
    <recommendedName>
        <fullName evidence="2">Small ribosomal subunit protein uS8c</fullName>
    </recommendedName>
    <alternativeName>
        <fullName>30S ribosomal protein S8, chloroplastic</fullName>
    </alternativeName>
</protein>
<gene>
    <name type="primary">rps8</name>
</gene>
<proteinExistence type="inferred from homology"/>
<dbReference type="EMBL" id="DQ864733">
    <property type="protein sequence ID" value="ABI49054.1"/>
    <property type="molecule type" value="Genomic_DNA"/>
</dbReference>
<dbReference type="RefSeq" id="YP_740511.1">
    <property type="nucleotide sequence ID" value="NC_008334.1"/>
</dbReference>
<dbReference type="SMR" id="Q09ME2"/>
<dbReference type="GeneID" id="4271187"/>
<dbReference type="KEGG" id="cit:4271187"/>
<dbReference type="OrthoDB" id="829096at71240"/>
<dbReference type="GO" id="GO:0009507">
    <property type="term" value="C:chloroplast"/>
    <property type="evidence" value="ECO:0007669"/>
    <property type="project" value="UniProtKB-SubCell"/>
</dbReference>
<dbReference type="GO" id="GO:1990904">
    <property type="term" value="C:ribonucleoprotein complex"/>
    <property type="evidence" value="ECO:0007669"/>
    <property type="project" value="UniProtKB-KW"/>
</dbReference>
<dbReference type="GO" id="GO:0005840">
    <property type="term" value="C:ribosome"/>
    <property type="evidence" value="ECO:0007669"/>
    <property type="project" value="UniProtKB-KW"/>
</dbReference>
<dbReference type="GO" id="GO:0019843">
    <property type="term" value="F:rRNA binding"/>
    <property type="evidence" value="ECO:0007669"/>
    <property type="project" value="UniProtKB-UniRule"/>
</dbReference>
<dbReference type="GO" id="GO:0003735">
    <property type="term" value="F:structural constituent of ribosome"/>
    <property type="evidence" value="ECO:0007669"/>
    <property type="project" value="InterPro"/>
</dbReference>
<dbReference type="GO" id="GO:0006412">
    <property type="term" value="P:translation"/>
    <property type="evidence" value="ECO:0007669"/>
    <property type="project" value="UniProtKB-UniRule"/>
</dbReference>
<dbReference type="FunFam" id="3.30.1490.10:FF:000001">
    <property type="entry name" value="30S ribosomal protein S8"/>
    <property type="match status" value="1"/>
</dbReference>
<dbReference type="Gene3D" id="3.30.1370.30">
    <property type="match status" value="1"/>
</dbReference>
<dbReference type="Gene3D" id="3.30.1490.10">
    <property type="match status" value="1"/>
</dbReference>
<dbReference type="HAMAP" id="MF_01302_B">
    <property type="entry name" value="Ribosomal_uS8_B"/>
    <property type="match status" value="1"/>
</dbReference>
<dbReference type="InterPro" id="IPR000630">
    <property type="entry name" value="Ribosomal_uS8"/>
</dbReference>
<dbReference type="InterPro" id="IPR047863">
    <property type="entry name" value="Ribosomal_uS8_CS"/>
</dbReference>
<dbReference type="InterPro" id="IPR035987">
    <property type="entry name" value="Ribosomal_uS8_sf"/>
</dbReference>
<dbReference type="NCBIfam" id="NF001109">
    <property type="entry name" value="PRK00136.1"/>
    <property type="match status" value="1"/>
</dbReference>
<dbReference type="PANTHER" id="PTHR11758">
    <property type="entry name" value="40S RIBOSOMAL PROTEIN S15A"/>
    <property type="match status" value="1"/>
</dbReference>
<dbReference type="Pfam" id="PF00410">
    <property type="entry name" value="Ribosomal_S8"/>
    <property type="match status" value="1"/>
</dbReference>
<dbReference type="SUPFAM" id="SSF56047">
    <property type="entry name" value="Ribosomal protein S8"/>
    <property type="match status" value="1"/>
</dbReference>
<dbReference type="PROSITE" id="PS00053">
    <property type="entry name" value="RIBOSOMAL_S8"/>
    <property type="match status" value="1"/>
</dbReference>
<comment type="function">
    <text evidence="1">One of the primary rRNA binding proteins, it binds directly to 16S rRNA central domain where it helps coordinate assembly of the platform of the 30S subunit.</text>
</comment>
<comment type="subunit">
    <text evidence="1">Part of the 30S ribosomal subunit.</text>
</comment>
<comment type="subcellular location">
    <subcellularLocation>
        <location>Plastid</location>
        <location>Chloroplast</location>
    </subcellularLocation>
</comment>
<comment type="similarity">
    <text evidence="2">Belongs to the universal ribosomal protein uS8 family.</text>
</comment>